<comment type="function">
    <text>Receptor for prostaglandin E2 (PGE2). The activity of this receptor is mediated by G(s) proteins that stimulate adenylate cyclase. The subsequent raise in intracellular cAMP is responsible for the relaxing effect of this receptor on smooth muscle.</text>
</comment>
<comment type="subcellular location">
    <subcellularLocation>
        <location>Cell membrane</location>
        <topology>Multi-pass membrane protein</topology>
    </subcellularLocation>
</comment>
<comment type="similarity">
    <text evidence="2">Belongs to the G-protein coupled receptor 1 family.</text>
</comment>
<sequence length="362" mass="40479">MDNFLNDSKLMEDCKSRQWLLSGESPAISSVMFSAGVLGNLIALALLARRWRGDTGCSAGSRTSISLFHVLVTELVLTDLLGTCLISPVVLASYSRNQTLVALAPESHACTYFAFTMTFFSLATMLMLFAMALERYLSIGYPYFYRRHLSRRGGLAVLPVIYGASLLFCSLPLLNYGEYVQYCPGTWCFIRHGRTAYLQLYATMLLLLIVAVLACNISVILNLIRMHRRSRRSRCGLSGSSLRGPGSRRRGERTSMAEETDHLILLAIMTITFAICSLPFTIFAYMDETSSLKEKWDLRALRFLSVNSIIDPWVFAILRPPVLRLMRSVLCCRTSLRTQEAQQTSCSTQSSASKQTDLCGQL</sequence>
<gene>
    <name type="primary">Ptger2</name>
    <name type="synonym">Ptgerep2</name>
</gene>
<keyword id="KW-1003">Cell membrane</keyword>
<keyword id="KW-1015">Disulfide bond</keyword>
<keyword id="KW-0297">G-protein coupled receptor</keyword>
<keyword id="KW-0325">Glycoprotein</keyword>
<keyword id="KW-0472">Membrane</keyword>
<keyword id="KW-0675">Receptor</keyword>
<keyword id="KW-1185">Reference proteome</keyword>
<keyword id="KW-0807">Transducer</keyword>
<keyword id="KW-0812">Transmembrane</keyword>
<keyword id="KW-1133">Transmembrane helix</keyword>
<name>PE2R2_MOUSE</name>
<feature type="chain" id="PRO_0000070055" description="Prostaglandin E2 receptor EP2 subtype">
    <location>
        <begin position="1"/>
        <end position="362"/>
    </location>
</feature>
<feature type="topological domain" description="Extracellular" evidence="1">
    <location>
        <begin position="1"/>
        <end position="24"/>
    </location>
</feature>
<feature type="transmembrane region" description="Helical; Name=1" evidence="1">
    <location>
        <begin position="25"/>
        <end position="48"/>
    </location>
</feature>
<feature type="topological domain" description="Cytoplasmic" evidence="1">
    <location>
        <begin position="49"/>
        <end position="66"/>
    </location>
</feature>
<feature type="transmembrane region" description="Helical; Name=2" evidence="1">
    <location>
        <begin position="67"/>
        <end position="92"/>
    </location>
</feature>
<feature type="topological domain" description="Extracellular" evidence="1">
    <location>
        <begin position="93"/>
        <end position="112"/>
    </location>
</feature>
<feature type="transmembrane region" description="Helical; Name=3" evidence="1">
    <location>
        <begin position="113"/>
        <end position="133"/>
    </location>
</feature>
<feature type="topological domain" description="Cytoplasmic" evidence="1">
    <location>
        <begin position="134"/>
        <end position="152"/>
    </location>
</feature>
<feature type="transmembrane region" description="Helical; Name=4" evidence="1">
    <location>
        <begin position="153"/>
        <end position="177"/>
    </location>
</feature>
<feature type="topological domain" description="Extracellular" evidence="1">
    <location>
        <begin position="178"/>
        <end position="199"/>
    </location>
</feature>
<feature type="transmembrane region" description="Helical; Name=5" evidence="1">
    <location>
        <begin position="200"/>
        <end position="224"/>
    </location>
</feature>
<feature type="topological domain" description="Cytoplasmic" evidence="1">
    <location>
        <begin position="225"/>
        <end position="262"/>
    </location>
</feature>
<feature type="transmembrane region" description="Helical; Name=6" evidence="1">
    <location>
        <begin position="263"/>
        <end position="286"/>
    </location>
</feature>
<feature type="topological domain" description="Extracellular" evidence="1">
    <location>
        <begin position="287"/>
        <end position="299"/>
    </location>
</feature>
<feature type="transmembrane region" description="Helical; Name=7" evidence="1">
    <location>
        <begin position="300"/>
        <end position="323"/>
    </location>
</feature>
<feature type="topological domain" description="Cytoplasmic" evidence="1">
    <location>
        <begin position="324"/>
        <end position="362"/>
    </location>
</feature>
<feature type="region of interest" description="Disordered" evidence="3">
    <location>
        <begin position="234"/>
        <end position="255"/>
    </location>
</feature>
<feature type="compositionally biased region" description="Low complexity" evidence="3">
    <location>
        <begin position="235"/>
        <end position="245"/>
    </location>
</feature>
<feature type="glycosylation site" description="N-linked (GlcNAc...) asparagine" evidence="1">
    <location>
        <position position="6"/>
    </location>
</feature>
<feature type="disulfide bond" evidence="2">
    <location>
        <begin position="110"/>
        <end position="188"/>
    </location>
</feature>
<reference key="1">
    <citation type="journal article" date="1995" name="FEBS Lett.">
        <title>The mouse prostaglandin E receptor EP2 subtype: cloning, expression, and northern blot analysis.</title>
        <authorList>
            <person name="Katsuyama M."/>
            <person name="Nishigaki N."/>
            <person name="Sugimoto Y."/>
            <person name="Morimoto K."/>
            <person name="Negishi M."/>
            <person name="Narumiya S."/>
            <person name="Ichikawa A."/>
        </authorList>
    </citation>
    <scope>NUCLEOTIDE SEQUENCE [MRNA]</scope>
    <source>
        <strain>ddY</strain>
        <tissue>Lung</tissue>
    </source>
</reference>
<reference key="2">
    <citation type="journal article" date="2004" name="Genome Res.">
        <title>The status, quality, and expansion of the NIH full-length cDNA project: the Mammalian Gene Collection (MGC).</title>
        <authorList>
            <consortium name="The MGC Project Team"/>
        </authorList>
    </citation>
    <scope>NUCLEOTIDE SEQUENCE [LARGE SCALE MRNA]</scope>
    <source>
        <strain>C57BL/6J</strain>
        <tissue>Mammary gland</tissue>
    </source>
</reference>
<organism>
    <name type="scientific">Mus musculus</name>
    <name type="common">Mouse</name>
    <dbReference type="NCBI Taxonomy" id="10090"/>
    <lineage>
        <taxon>Eukaryota</taxon>
        <taxon>Metazoa</taxon>
        <taxon>Chordata</taxon>
        <taxon>Craniata</taxon>
        <taxon>Vertebrata</taxon>
        <taxon>Euteleostomi</taxon>
        <taxon>Mammalia</taxon>
        <taxon>Eutheria</taxon>
        <taxon>Euarchontoglires</taxon>
        <taxon>Glires</taxon>
        <taxon>Rodentia</taxon>
        <taxon>Myomorpha</taxon>
        <taxon>Muroidea</taxon>
        <taxon>Muridae</taxon>
        <taxon>Murinae</taxon>
        <taxon>Mus</taxon>
        <taxon>Mus</taxon>
    </lineage>
</organism>
<protein>
    <recommendedName>
        <fullName>Prostaglandin E2 receptor EP2 subtype</fullName>
        <shortName>PGE receptor EP2 subtype</shortName>
        <shortName>PGE2 receptor EP2 subtype</shortName>
    </recommendedName>
    <alternativeName>
        <fullName>Prostanoid EP2 receptor</fullName>
    </alternativeName>
</protein>
<accession>Q62053</accession>
<evidence type="ECO:0000255" key="1"/>
<evidence type="ECO:0000255" key="2">
    <source>
        <dbReference type="PROSITE-ProRule" id="PRU00521"/>
    </source>
</evidence>
<evidence type="ECO:0000256" key="3">
    <source>
        <dbReference type="SAM" id="MobiDB-lite"/>
    </source>
</evidence>
<dbReference type="EMBL" id="D50589">
    <property type="protein sequence ID" value="BAA09137.1"/>
    <property type="molecule type" value="mRNA"/>
</dbReference>
<dbReference type="EMBL" id="BC005440">
    <property type="protein sequence ID" value="AAH05440.1"/>
    <property type="molecule type" value="mRNA"/>
</dbReference>
<dbReference type="CCDS" id="CCDS26972.1"/>
<dbReference type="PIR" id="S66674">
    <property type="entry name" value="S66674"/>
</dbReference>
<dbReference type="RefSeq" id="NP_032990.1">
    <property type="nucleotide sequence ID" value="NM_008964.4"/>
</dbReference>
<dbReference type="SMR" id="Q62053"/>
<dbReference type="CORUM" id="Q62053"/>
<dbReference type="FunCoup" id="Q62053">
    <property type="interactions" value="1280"/>
</dbReference>
<dbReference type="STRING" id="10090.ENSMUSP00000038483"/>
<dbReference type="BindingDB" id="Q62053"/>
<dbReference type="ChEMBL" id="CHEMBL2488"/>
<dbReference type="DrugCentral" id="Q62053"/>
<dbReference type="GuidetoPHARMACOLOGY" id="341"/>
<dbReference type="GlyCosmos" id="Q62053">
    <property type="glycosylation" value="1 site, No reported glycans"/>
</dbReference>
<dbReference type="GlyGen" id="Q62053">
    <property type="glycosylation" value="1 site"/>
</dbReference>
<dbReference type="PhosphoSitePlus" id="Q62053"/>
<dbReference type="PaxDb" id="10090-ENSMUSP00000038483"/>
<dbReference type="ProteomicsDB" id="301784"/>
<dbReference type="Antibodypedia" id="10768">
    <property type="antibodies" value="576 antibodies from 34 providers"/>
</dbReference>
<dbReference type="DNASU" id="19217"/>
<dbReference type="Ensembl" id="ENSMUST00000046891.6">
    <property type="protein sequence ID" value="ENSMUSP00000038483.6"/>
    <property type="gene ID" value="ENSMUSG00000037759.7"/>
</dbReference>
<dbReference type="GeneID" id="19217"/>
<dbReference type="KEGG" id="mmu:19217"/>
<dbReference type="UCSC" id="uc007tgd.2">
    <property type="organism name" value="mouse"/>
</dbReference>
<dbReference type="AGR" id="MGI:97794"/>
<dbReference type="CTD" id="5732"/>
<dbReference type="MGI" id="MGI:97794">
    <property type="gene designation" value="Ptger2"/>
</dbReference>
<dbReference type="VEuPathDB" id="HostDB:ENSMUSG00000037759"/>
<dbReference type="eggNOG" id="KOG3656">
    <property type="taxonomic scope" value="Eukaryota"/>
</dbReference>
<dbReference type="GeneTree" id="ENSGT01050000244902"/>
<dbReference type="HOGENOM" id="CLU_045991_0_2_1"/>
<dbReference type="InParanoid" id="Q62053"/>
<dbReference type="OMA" id="CSVSPFV"/>
<dbReference type="OrthoDB" id="5959154at2759"/>
<dbReference type="PhylomeDB" id="Q62053"/>
<dbReference type="TreeFam" id="TF324982"/>
<dbReference type="Reactome" id="R-MMU-391908">
    <property type="pathway name" value="Prostanoid ligand receptors"/>
</dbReference>
<dbReference type="Reactome" id="R-MMU-418555">
    <property type="pathway name" value="G alpha (s) signalling events"/>
</dbReference>
<dbReference type="BioGRID-ORCS" id="19217">
    <property type="hits" value="2 hits in 79 CRISPR screens"/>
</dbReference>
<dbReference type="ChiTaRS" id="Ptger2">
    <property type="organism name" value="mouse"/>
</dbReference>
<dbReference type="PRO" id="PR:Q62053"/>
<dbReference type="Proteomes" id="UP000000589">
    <property type="component" value="Chromosome 14"/>
</dbReference>
<dbReference type="RNAct" id="Q62053">
    <property type="molecule type" value="protein"/>
</dbReference>
<dbReference type="Bgee" id="ENSMUSG00000037759">
    <property type="expression patterns" value="Expressed in granulocyte and 89 other cell types or tissues"/>
</dbReference>
<dbReference type="ExpressionAtlas" id="Q62053">
    <property type="expression patterns" value="baseline and differential"/>
</dbReference>
<dbReference type="GO" id="GO:0005886">
    <property type="term" value="C:plasma membrane"/>
    <property type="evidence" value="ECO:0007669"/>
    <property type="project" value="UniProtKB-SubCell"/>
</dbReference>
<dbReference type="GO" id="GO:0004957">
    <property type="term" value="F:prostaglandin E receptor activity"/>
    <property type="evidence" value="ECO:0007669"/>
    <property type="project" value="Ensembl"/>
</dbReference>
<dbReference type="GO" id="GO:0007189">
    <property type="term" value="P:adenylate cyclase-activating G protein-coupled receptor signaling pathway"/>
    <property type="evidence" value="ECO:0000314"/>
    <property type="project" value="BHF-UCL"/>
</dbReference>
<dbReference type="GO" id="GO:0071380">
    <property type="term" value="P:cellular response to prostaglandin E stimulus"/>
    <property type="evidence" value="ECO:0000314"/>
    <property type="project" value="BHF-UCL"/>
</dbReference>
<dbReference type="GO" id="GO:1904346">
    <property type="term" value="P:positive regulation of gastric mucosal blood circulation"/>
    <property type="evidence" value="ECO:0007669"/>
    <property type="project" value="Ensembl"/>
</dbReference>
<dbReference type="GO" id="GO:0042127">
    <property type="term" value="P:regulation of cell population proliferation"/>
    <property type="evidence" value="ECO:0000316"/>
    <property type="project" value="MGI"/>
</dbReference>
<dbReference type="GO" id="GO:0032496">
    <property type="term" value="P:response to lipopolysaccharide"/>
    <property type="evidence" value="ECO:0000315"/>
    <property type="project" value="MGI"/>
</dbReference>
<dbReference type="GO" id="GO:0009624">
    <property type="term" value="P:response to nematode"/>
    <property type="evidence" value="ECO:0000315"/>
    <property type="project" value="MGI"/>
</dbReference>
<dbReference type="GO" id="GO:0032570">
    <property type="term" value="P:response to progesterone"/>
    <property type="evidence" value="ECO:0000314"/>
    <property type="project" value="CACAO"/>
</dbReference>
<dbReference type="CDD" id="cd15139">
    <property type="entry name" value="7tmA_PGE2_EP2"/>
    <property type="match status" value="1"/>
</dbReference>
<dbReference type="FunFam" id="1.20.1070.10:FF:000212">
    <property type="entry name" value="Prostaglandin E2 receptor EP2 subtype"/>
    <property type="match status" value="1"/>
</dbReference>
<dbReference type="Gene3D" id="1.20.1070.10">
    <property type="entry name" value="Rhodopsin 7-helix transmembrane proteins"/>
    <property type="match status" value="1"/>
</dbReference>
<dbReference type="InterPro" id="IPR000276">
    <property type="entry name" value="GPCR_Rhodpsn"/>
</dbReference>
<dbReference type="InterPro" id="IPR017452">
    <property type="entry name" value="GPCR_Rhodpsn_7TM"/>
</dbReference>
<dbReference type="InterPro" id="IPR008365">
    <property type="entry name" value="Prostanoid_rcpt"/>
</dbReference>
<dbReference type="InterPro" id="IPR001923">
    <property type="entry name" value="Prostglndn_EP2_rcpt"/>
</dbReference>
<dbReference type="PANTHER" id="PTHR11866">
    <property type="entry name" value="G-PROTEIN COUPLED RECEPTOR FAMILY 1 MEMBER"/>
    <property type="match status" value="1"/>
</dbReference>
<dbReference type="PANTHER" id="PTHR11866:SF8">
    <property type="entry name" value="PROSTAGLANDIN E2 RECEPTOR EP2 SUBTYPE"/>
    <property type="match status" value="1"/>
</dbReference>
<dbReference type="Pfam" id="PF00001">
    <property type="entry name" value="7tm_1"/>
    <property type="match status" value="1"/>
</dbReference>
<dbReference type="PRINTS" id="PR00237">
    <property type="entry name" value="GPCRRHODOPSN"/>
</dbReference>
<dbReference type="PRINTS" id="PR01788">
    <property type="entry name" value="PROSTANOIDR"/>
</dbReference>
<dbReference type="PRINTS" id="PR00581">
    <property type="entry name" value="PRSTNOIDEP2R"/>
</dbReference>
<dbReference type="SUPFAM" id="SSF81321">
    <property type="entry name" value="Family A G protein-coupled receptor-like"/>
    <property type="match status" value="1"/>
</dbReference>
<dbReference type="PROSITE" id="PS00237">
    <property type="entry name" value="G_PROTEIN_RECEP_F1_1"/>
    <property type="match status" value="1"/>
</dbReference>
<dbReference type="PROSITE" id="PS50262">
    <property type="entry name" value="G_PROTEIN_RECEP_F1_2"/>
    <property type="match status" value="1"/>
</dbReference>
<proteinExistence type="evidence at transcript level"/>